<comment type="subcellular location">
    <subcellularLocation>
        <location evidence="2">Cell membrane</location>
        <topology evidence="2">Multi-pass membrane protein</topology>
    </subcellularLocation>
</comment>
<comment type="similarity">
    <text evidence="2">Belongs to the phosphoethanolamine transferase family.</text>
</comment>
<sequence length="485" mass="55401">MKKLNMEILSERWIIATFSFQGRQYNTKKTSQILPALFAVICAAFAGYFILIGSGMFTEPSVALILLATITILLLSSSKKSFYFILLPLTLLHAFYTPTGLNFGPPSYQYIASLFATDILETKEFLLQIPVSSYLIAFAIPILIFLQYKSAVKFGIKFYRNKTFIALATLLFAYNMPLAEPLKETVSSTLKIVDEVQKLKQISQSDNWGKSTLENSRYDDYVIVLGESARKDYHHAYGYPIENTPFMSNAKGTLIDGFRSAGTNTVASLRLMLTFPDKEKWEPNYSLSLVDLIKSAGIKTYWLSNHGMIGKFDTPVSSLASKSDETFFLKKGGSFNSTNFSDFDLLPKFAQVLENSVQGKRFIVLHIYGSHPMACDRIEDYPKIFDDKDLNPRYGYLNCYVSSIKKTDEFLKRVYDQLEENVKKNHRTFSMIYFSDHGLCHQQDEKTIYFCSIKTVSAESTIIFRYSKFHQMIWNAKNIRCLNQV</sequence>
<organism>
    <name type="scientific">Haemophilus influenzae (strain ATCC 51907 / DSM 11121 / KW20 / Rd)</name>
    <dbReference type="NCBI Taxonomy" id="71421"/>
    <lineage>
        <taxon>Bacteria</taxon>
        <taxon>Pseudomonadati</taxon>
        <taxon>Pseudomonadota</taxon>
        <taxon>Gammaproteobacteria</taxon>
        <taxon>Pasteurellales</taxon>
        <taxon>Pasteurellaceae</taxon>
        <taxon>Haemophilus</taxon>
    </lineage>
</organism>
<dbReference type="EC" id="2.7.-.-"/>
<dbReference type="EMBL" id="L42023">
    <property type="protein sequence ID" value="AAC22718.1"/>
    <property type="molecule type" value="Genomic_DNA"/>
</dbReference>
<dbReference type="PIR" id="F64165">
    <property type="entry name" value="F64165"/>
</dbReference>
<dbReference type="SMR" id="P71367"/>
<dbReference type="STRING" id="71421.HI_1064"/>
<dbReference type="EnsemblBacteria" id="AAC22718">
    <property type="protein sequence ID" value="AAC22718"/>
    <property type="gene ID" value="HI_1064"/>
</dbReference>
<dbReference type="KEGG" id="hin:HI_1064"/>
<dbReference type="eggNOG" id="COG2194">
    <property type="taxonomic scope" value="Bacteria"/>
</dbReference>
<dbReference type="HOGENOM" id="CLU_039390_3_0_6"/>
<dbReference type="PhylomeDB" id="P71367"/>
<dbReference type="Proteomes" id="UP000000579">
    <property type="component" value="Chromosome"/>
</dbReference>
<dbReference type="GO" id="GO:0005886">
    <property type="term" value="C:plasma membrane"/>
    <property type="evidence" value="ECO:0000318"/>
    <property type="project" value="GO_Central"/>
</dbReference>
<dbReference type="GO" id="GO:0016776">
    <property type="term" value="F:phosphotransferase activity, phosphate group as acceptor"/>
    <property type="evidence" value="ECO:0000318"/>
    <property type="project" value="GO_Central"/>
</dbReference>
<dbReference type="GO" id="GO:0009244">
    <property type="term" value="P:lipopolysaccharide core region biosynthetic process"/>
    <property type="evidence" value="ECO:0000318"/>
    <property type="project" value="GO_Central"/>
</dbReference>
<dbReference type="CDD" id="cd16017">
    <property type="entry name" value="LptA"/>
    <property type="match status" value="1"/>
</dbReference>
<dbReference type="Gene3D" id="3.40.720.10">
    <property type="entry name" value="Alkaline Phosphatase, subunit A"/>
    <property type="match status" value="1"/>
</dbReference>
<dbReference type="InterPro" id="IPR017850">
    <property type="entry name" value="Alkaline_phosphatase_core_sf"/>
</dbReference>
<dbReference type="InterPro" id="IPR040423">
    <property type="entry name" value="PEA_transferase"/>
</dbReference>
<dbReference type="InterPro" id="IPR000917">
    <property type="entry name" value="Sulfatase_N"/>
</dbReference>
<dbReference type="PANTHER" id="PTHR30443">
    <property type="entry name" value="INNER MEMBRANE PROTEIN"/>
    <property type="match status" value="1"/>
</dbReference>
<dbReference type="PANTHER" id="PTHR30443:SF4">
    <property type="entry name" value="PHOSPHOETHANOLAMINE TRANSFERASE OPGE-RELATED"/>
    <property type="match status" value="1"/>
</dbReference>
<dbReference type="Pfam" id="PF00884">
    <property type="entry name" value="Sulfatase"/>
    <property type="match status" value="1"/>
</dbReference>
<dbReference type="SUPFAM" id="SSF53649">
    <property type="entry name" value="Alkaline phosphatase-like"/>
    <property type="match status" value="1"/>
</dbReference>
<protein>
    <recommendedName>
        <fullName>Putative phosphoethanolamine transferase HI_1064</fullName>
        <ecNumber>2.7.-.-</ecNumber>
    </recommendedName>
</protein>
<gene>
    <name type="ordered locus">HI_1064</name>
</gene>
<proteinExistence type="inferred from homology"/>
<feature type="chain" id="PRO_0000209154" description="Putative phosphoethanolamine transferase HI_1064">
    <location>
        <begin position="1"/>
        <end position="485"/>
    </location>
</feature>
<feature type="transmembrane region" description="Helical" evidence="1">
    <location>
        <begin position="33"/>
        <end position="53"/>
    </location>
</feature>
<feature type="transmembrane region" description="Helical" evidence="1">
    <location>
        <begin position="55"/>
        <end position="75"/>
    </location>
</feature>
<feature type="transmembrane region" description="Helical" evidence="1">
    <location>
        <begin position="81"/>
        <end position="101"/>
    </location>
</feature>
<feature type="transmembrane region" description="Helical" evidence="1">
    <location>
        <begin position="125"/>
        <end position="145"/>
    </location>
</feature>
<keyword id="KW-1003">Cell membrane</keyword>
<keyword id="KW-0472">Membrane</keyword>
<keyword id="KW-1185">Reference proteome</keyword>
<keyword id="KW-0808">Transferase</keyword>
<keyword id="KW-0812">Transmembrane</keyword>
<keyword id="KW-1133">Transmembrane helix</keyword>
<accession>P71367</accession>
<name>Y1064_HAEIN</name>
<reference key="1">
    <citation type="journal article" date="1995" name="Science">
        <title>Whole-genome random sequencing and assembly of Haemophilus influenzae Rd.</title>
        <authorList>
            <person name="Fleischmann R.D."/>
            <person name="Adams M.D."/>
            <person name="White O."/>
            <person name="Clayton R.A."/>
            <person name="Kirkness E.F."/>
            <person name="Kerlavage A.R."/>
            <person name="Bult C.J."/>
            <person name="Tomb J.-F."/>
            <person name="Dougherty B.A."/>
            <person name="Merrick J.M."/>
            <person name="McKenney K."/>
            <person name="Sutton G.G."/>
            <person name="FitzHugh W."/>
            <person name="Fields C.A."/>
            <person name="Gocayne J.D."/>
            <person name="Scott J.D."/>
            <person name="Shirley R."/>
            <person name="Liu L.-I."/>
            <person name="Glodek A."/>
            <person name="Kelley J.M."/>
            <person name="Weidman J.F."/>
            <person name="Phillips C.A."/>
            <person name="Spriggs T."/>
            <person name="Hedblom E."/>
            <person name="Cotton M.D."/>
            <person name="Utterback T.R."/>
            <person name="Hanna M.C."/>
            <person name="Nguyen D.T."/>
            <person name="Saudek D.M."/>
            <person name="Brandon R.C."/>
            <person name="Fine L.D."/>
            <person name="Fritchman J.L."/>
            <person name="Fuhrmann J.L."/>
            <person name="Geoghagen N.S.M."/>
            <person name="Gnehm C.L."/>
            <person name="McDonald L.A."/>
            <person name="Small K.V."/>
            <person name="Fraser C.M."/>
            <person name="Smith H.O."/>
            <person name="Venter J.C."/>
        </authorList>
    </citation>
    <scope>NUCLEOTIDE SEQUENCE [LARGE SCALE GENOMIC DNA]</scope>
    <source>
        <strain>ATCC 51907 / DSM 11121 / KW20 / Rd</strain>
    </source>
</reference>
<evidence type="ECO:0000255" key="1"/>
<evidence type="ECO:0000305" key="2"/>